<proteinExistence type="evidence at protein level"/>
<evidence type="ECO:0000250" key="1"/>
<evidence type="ECO:0000255" key="2"/>
<evidence type="ECO:0000255" key="3">
    <source>
        <dbReference type="PROSITE-ProRule" id="PRU00274"/>
    </source>
</evidence>
<evidence type="ECO:0000269" key="4">
    <source>
    </source>
</evidence>
<evidence type="ECO:0000269" key="5">
    <source>
    </source>
</evidence>
<evidence type="ECO:0000269" key="6">
    <source>
    </source>
</evidence>
<evidence type="ECO:0000269" key="7">
    <source>
    </source>
</evidence>
<evidence type="ECO:0000269" key="8">
    <source>
    </source>
</evidence>
<evidence type="ECO:0000269" key="9">
    <source>
    </source>
</evidence>
<evidence type="ECO:0000269" key="10">
    <source>
    </source>
</evidence>
<evidence type="ECO:0000269" key="11">
    <source>
    </source>
</evidence>
<evidence type="ECO:0000269" key="12">
    <source>
    </source>
</evidence>
<evidence type="ECO:0000269" key="13">
    <source>
    </source>
</evidence>
<evidence type="ECO:0000269" key="14">
    <source>
    </source>
</evidence>
<evidence type="ECO:0000269" key="15">
    <source>
    </source>
</evidence>
<evidence type="ECO:0000269" key="16">
    <source ref="4"/>
</evidence>
<evidence type="ECO:0000269" key="17">
    <source ref="7"/>
</evidence>
<evidence type="ECO:0000303" key="18">
    <source>
    </source>
</evidence>
<evidence type="ECO:0000303" key="19">
    <source>
    </source>
</evidence>
<evidence type="ECO:0000303" key="20">
    <source>
    </source>
</evidence>
<evidence type="ECO:0000303" key="21">
    <source>
    </source>
</evidence>
<evidence type="ECO:0000303" key="22">
    <source>
    </source>
</evidence>
<evidence type="ECO:0000303" key="23">
    <source>
    </source>
</evidence>
<evidence type="ECO:0000305" key="24"/>
<evidence type="ECO:0000305" key="25">
    <source>
    </source>
</evidence>
<evidence type="ECO:0007744" key="26">
    <source>
        <dbReference type="PDB" id="1H4W"/>
    </source>
</evidence>
<evidence type="ECO:0007744" key="27">
    <source>
        <dbReference type="PDB" id="2R9P"/>
    </source>
</evidence>
<evidence type="ECO:0007744" key="28">
    <source>
        <dbReference type="PDB" id="3L33"/>
    </source>
</evidence>
<evidence type="ECO:0007744" key="29">
    <source>
        <dbReference type="PDB" id="3L3T"/>
    </source>
</evidence>
<evidence type="ECO:0007744" key="30">
    <source>
        <dbReference type="PDB" id="3P92"/>
    </source>
</evidence>
<evidence type="ECO:0007744" key="31">
    <source>
        <dbReference type="PDB" id="3P95"/>
    </source>
</evidence>
<evidence type="ECO:0007744" key="32">
    <source>
        <dbReference type="PDB" id="4DG4"/>
    </source>
</evidence>
<evidence type="ECO:0007744" key="33">
    <source>
        <dbReference type="PDB" id="4U30"/>
    </source>
</evidence>
<evidence type="ECO:0007744" key="34">
    <source>
        <dbReference type="PDB" id="4U32"/>
    </source>
</evidence>
<evidence type="ECO:0007744" key="35">
    <source>
        <dbReference type="PDB" id="5C67"/>
    </source>
</evidence>
<evidence type="ECO:0007744" key="36">
    <source>
        <dbReference type="PDB" id="5JBT"/>
    </source>
</evidence>
<evidence type="ECO:0007744" key="37">
    <source>
        <dbReference type="PDB" id="5TP0"/>
    </source>
</evidence>
<evidence type="ECO:0007829" key="38">
    <source>
        <dbReference type="PDB" id="2R9P"/>
    </source>
</evidence>
<evidence type="ECO:0007829" key="39">
    <source>
        <dbReference type="PDB" id="3L3T"/>
    </source>
</evidence>
<evidence type="ECO:0007829" key="40">
    <source>
        <dbReference type="PDB" id="3P92"/>
    </source>
</evidence>
<evidence type="ECO:0007829" key="41">
    <source>
        <dbReference type="PDB" id="5TP0"/>
    </source>
</evidence>
<sequence length="304" mass="32529">MCGPDDRCPARWPGPGRAVKCGKGLAAARPGRVERGGAQRGGAGLELHPLLGGRTWRAARDADGCEALGTVAVPFDDDDKIVGGYTCEENSLPYQVSLNSGSHFCGGSLISEQWVVSAAHCYKTRIQVRLGEHNIKVLEGNEQFINAAKIIRHPKYNRDTLDNDIMLIKLSSPAVINARVSTISLPTTPPAAGTECLISGWGNTLSFGADYPDELKCLDAPVLTQAECKASYPGKITNSMFCVGFLEGGKDSCQRDSGGPVVCNGQLQGVVSWGHGCAWKNRPGVYTKVYNYVDWIKDTIAANS</sequence>
<comment type="function">
    <text evidence="4 6 8 11 12 15">Digestive protease that cleaves proteins preferentially after an Arg residue and has proteolytic activity toward Kunitz-type trypsin inhibitors.</text>
</comment>
<comment type="catalytic activity">
    <reaction evidence="4 6 8 11 12 13 15">
        <text>Preferential cleavage: Arg-|-Xaa, Lys-|-Xaa.</text>
        <dbReference type="EC" id="3.4.21.4"/>
    </reaction>
</comment>
<comment type="cofactor">
    <cofactor evidence="6 13">
        <name>Ca(2+)</name>
        <dbReference type="ChEBI" id="CHEBI:29108"/>
    </cofactor>
    <text evidence="4 11 12">Binds 1 Ca(2+) ion per subunit.</text>
</comment>
<comment type="activity regulation">
    <text evidence="8 15">Not inhibited by Kunitz-type trypsin inhibitors.</text>
</comment>
<comment type="biophysicochemical properties">
    <phDependence>
        <text evidence="13">Optimum pH is 8.5.</text>
    </phDependence>
</comment>
<comment type="subcellular location">
    <subcellularLocation>
        <location evidence="13">Secreted</location>
    </subcellularLocation>
</comment>
<comment type="alternative products">
    <event type="alternative splicing"/>
    <isoform>
        <id>P35030-1</id>
        <name>1</name>
        <name>A</name>
        <sequence type="displayed"/>
    </isoform>
    <isoform>
        <id>P35030-2</id>
        <name>2</name>
        <name>B</name>
        <sequence type="described" ref="VSP_042074"/>
    </isoform>
    <isoform>
        <id>P35030-3</id>
        <name>3</name>
        <name>C</name>
        <sequence type="described" ref="VSP_005410"/>
    </isoform>
    <isoform>
        <id>P35030-4</id>
        <name>4</name>
        <name>D</name>
        <sequence type="described" ref="VSP_005409"/>
    </isoform>
    <isoform>
        <id>P35030-5</id>
        <name>5</name>
        <name>E</name>
        <sequence type="described" ref="VSP_053779"/>
    </isoform>
</comment>
<comment type="tissue specificity">
    <text evidence="5 13 14">Detected in pancreas and pancreatic fluid (at protein level) (PubMed:6698368). Expressed in pancreas and brain (PubMed:8294000). Detected in ileum (PubMed:12021776).</text>
</comment>
<comment type="similarity">
    <text evidence="3">Belongs to the peptidase S1 family.</text>
</comment>
<dbReference type="EC" id="3.4.21.4" evidence="4 6 8 11 12 13 15"/>
<dbReference type="EMBL" id="X72781">
    <property type="protein sequence ID" value="CAB58178.1"/>
    <property type="molecule type" value="mRNA"/>
</dbReference>
<dbReference type="EMBL" id="X71345">
    <property type="protein sequence ID" value="CAA50484.1"/>
    <property type="molecule type" value="mRNA"/>
</dbReference>
<dbReference type="EMBL" id="X15505">
    <property type="protein sequence ID" value="CAA33527.1"/>
    <property type="molecule type" value="mRNA"/>
</dbReference>
<dbReference type="EMBL" id="D45417">
    <property type="protein sequence ID" value="BAA08257.1"/>
    <property type="molecule type" value="mRNA"/>
</dbReference>
<dbReference type="EMBL" id="AF029308">
    <property type="protein sequence ID" value="AAC13322.1"/>
    <property type="molecule type" value="Genomic_DNA"/>
</dbReference>
<dbReference type="EMBL" id="AB298285">
    <property type="protein sequence ID" value="BAF80324.1"/>
    <property type="molecule type" value="mRNA"/>
</dbReference>
<dbReference type="EMBL" id="AB298286">
    <property type="protein sequence ID" value="BAF80325.1"/>
    <property type="molecule type" value="mRNA"/>
</dbReference>
<dbReference type="EMBL" id="AL139113">
    <property type="status" value="NOT_ANNOTATED_CDS"/>
    <property type="molecule type" value="Genomic_DNA"/>
</dbReference>
<dbReference type="EMBL" id="AL356489">
    <property type="status" value="NOT_ANNOTATED_CDS"/>
    <property type="molecule type" value="Genomic_DNA"/>
</dbReference>
<dbReference type="EMBL" id="AL358573">
    <property type="status" value="NOT_ANNOTATED_CDS"/>
    <property type="molecule type" value="Genomic_DNA"/>
</dbReference>
<dbReference type="EMBL" id="CH471071">
    <property type="protein sequence ID" value="EAW58482.1"/>
    <property type="molecule type" value="Genomic_DNA"/>
</dbReference>
<dbReference type="EMBL" id="CH471071">
    <property type="protein sequence ID" value="EAW58484.1"/>
    <property type="molecule type" value="Genomic_DNA"/>
</dbReference>
<dbReference type="EMBL" id="BC069476">
    <property type="protein sequence ID" value="AAH69476.1"/>
    <property type="molecule type" value="mRNA"/>
</dbReference>
<dbReference type="EMBL" id="BC069494">
    <property type="protein sequence ID" value="AAH69494.1"/>
    <property type="molecule type" value="mRNA"/>
</dbReference>
<dbReference type="CCDS" id="CCDS56570.1">
    <molecule id="P35030-5"/>
</dbReference>
<dbReference type="CCDS" id="CCDS6545.1">
    <molecule id="P35030-3"/>
</dbReference>
<dbReference type="PIR" id="S12764">
    <property type="entry name" value="S12764"/>
</dbReference>
<dbReference type="PIR" id="S33496">
    <property type="entry name" value="S33496"/>
</dbReference>
<dbReference type="RefSeq" id="NP_001184026.3">
    <molecule id="P35030-4"/>
    <property type="nucleotide sequence ID" value="NM_001197097.3"/>
</dbReference>
<dbReference type="RefSeq" id="NP_001184027.1">
    <property type="nucleotide sequence ID" value="NM_001197098.1"/>
</dbReference>
<dbReference type="RefSeq" id="NP_002762.2">
    <molecule id="P35030-3"/>
    <property type="nucleotide sequence ID" value="NM_002771.3"/>
</dbReference>
<dbReference type="RefSeq" id="NP_031369.2">
    <property type="nucleotide sequence ID" value="NM_007343.3"/>
</dbReference>
<dbReference type="RefSeq" id="XP_047279558.1">
    <molecule id="P35030-3"/>
    <property type="nucleotide sequence ID" value="XM_047423602.1"/>
</dbReference>
<dbReference type="PDB" id="1H4W">
    <property type="method" value="X-ray"/>
    <property type="resolution" value="1.70 A"/>
    <property type="chains" value="A=81-304"/>
</dbReference>
<dbReference type="PDB" id="2R9P">
    <property type="method" value="X-ray"/>
    <property type="resolution" value="1.40 A"/>
    <property type="chains" value="A/B/C/D=81-304"/>
</dbReference>
<dbReference type="PDB" id="3L33">
    <property type="method" value="X-ray"/>
    <property type="resolution" value="2.48 A"/>
    <property type="chains" value="A/B/C/D=81-304"/>
</dbReference>
<dbReference type="PDB" id="3L3T">
    <property type="method" value="X-ray"/>
    <property type="resolution" value="2.38 A"/>
    <property type="chains" value="A/B/C/D=81-304"/>
</dbReference>
<dbReference type="PDB" id="3P92">
    <property type="method" value="X-ray"/>
    <property type="resolution" value="1.60 A"/>
    <property type="chains" value="A=81-304"/>
</dbReference>
<dbReference type="PDB" id="3P95">
    <property type="method" value="X-ray"/>
    <property type="resolution" value="1.30 A"/>
    <property type="chains" value="A=81-304"/>
</dbReference>
<dbReference type="PDB" id="4DG4">
    <property type="method" value="X-ray"/>
    <property type="resolution" value="1.40 A"/>
    <property type="chains" value="A/B/D/G=81-304"/>
</dbReference>
<dbReference type="PDB" id="4U30">
    <property type="method" value="X-ray"/>
    <property type="resolution" value="2.50 A"/>
    <property type="chains" value="A/B/C/D=81-304"/>
</dbReference>
<dbReference type="PDB" id="4U32">
    <property type="method" value="X-ray"/>
    <property type="resolution" value="1.65 A"/>
    <property type="chains" value="A=81-304"/>
</dbReference>
<dbReference type="PDB" id="5C67">
    <property type="method" value="X-ray"/>
    <property type="resolution" value="1.83 A"/>
    <property type="chains" value="A/B=81-304"/>
</dbReference>
<dbReference type="PDB" id="5JBT">
    <property type="method" value="X-ray"/>
    <property type="resolution" value="1.40 A"/>
    <property type="chains" value="A=81-304"/>
</dbReference>
<dbReference type="PDB" id="5TP0">
    <property type="method" value="X-ray"/>
    <property type="resolution" value="1.25 A"/>
    <property type="chains" value="A=81-304"/>
</dbReference>
<dbReference type="PDB" id="6BX8">
    <property type="method" value="X-ray"/>
    <property type="resolution" value="1.98 A"/>
    <property type="chains" value="A/C/E/G=81-304"/>
</dbReference>
<dbReference type="PDB" id="6GFI">
    <property type="method" value="X-ray"/>
    <property type="resolution" value="2.30 A"/>
    <property type="chains" value="A/B=81-304"/>
</dbReference>
<dbReference type="PDBsum" id="1H4W"/>
<dbReference type="PDBsum" id="2R9P"/>
<dbReference type="PDBsum" id="3L33"/>
<dbReference type="PDBsum" id="3L3T"/>
<dbReference type="PDBsum" id="3P92"/>
<dbReference type="PDBsum" id="3P95"/>
<dbReference type="PDBsum" id="4DG4"/>
<dbReference type="PDBsum" id="4U30"/>
<dbReference type="PDBsum" id="4U32"/>
<dbReference type="PDBsum" id="5C67"/>
<dbReference type="PDBsum" id="5JBT"/>
<dbReference type="PDBsum" id="5TP0"/>
<dbReference type="PDBsum" id="6BX8"/>
<dbReference type="PDBsum" id="6GFI"/>
<dbReference type="SMR" id="P35030"/>
<dbReference type="BioGRID" id="111628">
    <property type="interactions" value="58"/>
</dbReference>
<dbReference type="FunCoup" id="P35030">
    <property type="interactions" value="736"/>
</dbReference>
<dbReference type="IntAct" id="P35030">
    <property type="interactions" value="29"/>
</dbReference>
<dbReference type="MINT" id="P35030"/>
<dbReference type="STRING" id="9606.ENSP00000354280"/>
<dbReference type="BindingDB" id="P35030"/>
<dbReference type="ChEMBL" id="CHEMBL4551"/>
<dbReference type="DrugBank" id="DB04369">
    <property type="generic name" value="1,3,2-Dioxaborolan-2-Ol"/>
</dbReference>
<dbReference type="DrugBank" id="DB02308">
    <property type="generic name" value="4-(1,3,2-Dioxaborolan-2-Yloxy)Butan-1-Aminium"/>
</dbReference>
<dbReference type="DrugBank" id="DB02585">
    <property type="generic name" value="4-(Hydroxymethyl)Benzamidine"/>
</dbReference>
<dbReference type="DrugBank" id="DB02541">
    <property type="generic name" value="4-Hydroxybutan-1-Aminium"/>
</dbReference>
<dbReference type="DrugBank" id="DB04109">
    <property type="generic name" value="[4-(1,3,2-Dioxaborolan-2-Yloxy)Methyl]Benzamidine"/>
</dbReference>
<dbReference type="DrugBank" id="DB03127">
    <property type="generic name" value="Benzamidine"/>
</dbReference>
<dbReference type="DrugBank" id="DB03129">
    <property type="generic name" value="Diamino-N-[3-(1,3,2-dioxaborolan-2-yloxy)propyl]methaniminium"/>
</dbReference>
<dbReference type="DrugBank" id="DB03637">
    <property type="generic name" value="Guanidine-3-propanol"/>
</dbReference>
<dbReference type="DrugCentral" id="P35030"/>
<dbReference type="GuidetoPHARMACOLOGY" id="2399"/>
<dbReference type="MEROPS" id="S01.174"/>
<dbReference type="GlyGen" id="P35030">
    <property type="glycosylation" value="3 sites, 1 O-linked glycan (3 sites)"/>
</dbReference>
<dbReference type="iPTMnet" id="P35030"/>
<dbReference type="PhosphoSitePlus" id="P35030"/>
<dbReference type="BioMuta" id="PRSS3"/>
<dbReference type="DMDM" id="209572698"/>
<dbReference type="jPOST" id="P35030"/>
<dbReference type="MassIVE" id="P35030"/>
<dbReference type="PaxDb" id="9606-ENSP00000354280"/>
<dbReference type="PeptideAtlas" id="P35030"/>
<dbReference type="ProteomicsDB" id="29982"/>
<dbReference type="ProteomicsDB" id="54972">
    <molecule id="P35030-1"/>
</dbReference>
<dbReference type="ProteomicsDB" id="54973">
    <molecule id="P35030-2"/>
</dbReference>
<dbReference type="ProteomicsDB" id="54974">
    <molecule id="P35030-3"/>
</dbReference>
<dbReference type="ProteomicsDB" id="54975">
    <molecule id="P35030-4"/>
</dbReference>
<dbReference type="Antibodypedia" id="11047">
    <property type="antibodies" value="343 antibodies from 29 providers"/>
</dbReference>
<dbReference type="DNASU" id="5646"/>
<dbReference type="Ensembl" id="ENST00000379405.4">
    <molecule id="P35030-3"/>
    <property type="protein sequence ID" value="ENSP00000368715.3"/>
    <property type="gene ID" value="ENSG00000010438.17"/>
</dbReference>
<dbReference type="Ensembl" id="ENST00000429677.8">
    <molecule id="P35030-5"/>
    <property type="protein sequence ID" value="ENSP00000401828.3"/>
    <property type="gene ID" value="ENSG00000010438.17"/>
</dbReference>
<dbReference type="GeneID" id="5646"/>
<dbReference type="KEGG" id="hsa:5646"/>
<dbReference type="MANE-Select" id="ENST00000379405.4">
    <molecule id="P35030-3"/>
    <property type="protein sequence ID" value="ENSP00000368715.3"/>
    <property type="RefSeq nucleotide sequence ID" value="NM_002771.4"/>
    <property type="RefSeq protein sequence ID" value="NP_002762.3"/>
</dbReference>
<dbReference type="UCSC" id="uc003zti.5">
    <molecule id="P35030-1"/>
    <property type="organism name" value="human"/>
</dbReference>
<dbReference type="AGR" id="HGNC:9486"/>
<dbReference type="CTD" id="5646"/>
<dbReference type="DisGeNET" id="5646"/>
<dbReference type="GeneCards" id="PRSS3"/>
<dbReference type="HGNC" id="HGNC:9486">
    <property type="gene designation" value="PRSS3"/>
</dbReference>
<dbReference type="HPA" id="ENSG00000010438">
    <property type="expression patterns" value="Tissue enriched (pancreas)"/>
</dbReference>
<dbReference type="MIM" id="613578">
    <property type="type" value="gene"/>
</dbReference>
<dbReference type="neXtProt" id="NX_P35030"/>
<dbReference type="OpenTargets" id="ENSG00000010438"/>
<dbReference type="PharmGKB" id="PA33838"/>
<dbReference type="VEuPathDB" id="HostDB:ENSG00000010438"/>
<dbReference type="eggNOG" id="KOG3627">
    <property type="taxonomic scope" value="Eukaryota"/>
</dbReference>
<dbReference type="GeneTree" id="ENSGT01050000244883"/>
<dbReference type="HOGENOM" id="CLU_006842_7_1_1"/>
<dbReference type="InParanoid" id="P35030"/>
<dbReference type="OMA" id="TSNMFYV"/>
<dbReference type="OrthoDB" id="10059102at2759"/>
<dbReference type="PAN-GO" id="P35030">
    <property type="GO annotations" value="3 GO annotations based on evolutionary models"/>
</dbReference>
<dbReference type="PhylomeDB" id="P35030"/>
<dbReference type="TreeFam" id="TF331065"/>
<dbReference type="PathwayCommons" id="P35030"/>
<dbReference type="Reactome" id="R-HSA-1462054">
    <property type="pathway name" value="Alpha-defensins"/>
</dbReference>
<dbReference type="Reactome" id="R-HSA-6798695">
    <property type="pathway name" value="Neutrophil degranulation"/>
</dbReference>
<dbReference type="Reactome" id="R-HSA-6803157">
    <property type="pathway name" value="Antimicrobial peptides"/>
</dbReference>
<dbReference type="Reactome" id="R-HSA-9725554">
    <property type="pathway name" value="Differentiation of Keratinocytes in Interfollicular Epidermis in Mammalian Skin"/>
</dbReference>
<dbReference type="Reactome" id="R-HSA-9758881">
    <property type="pathway name" value="Uptake of dietary cobalamins into enterocytes"/>
</dbReference>
<dbReference type="SignaLink" id="P35030"/>
<dbReference type="SIGNOR" id="P35030"/>
<dbReference type="BioGRID-ORCS" id="5646">
    <property type="hits" value="19 hits in 1118 CRISPR screens"/>
</dbReference>
<dbReference type="ChiTaRS" id="PRSS3">
    <property type="organism name" value="human"/>
</dbReference>
<dbReference type="EvolutionaryTrace" id="P35030"/>
<dbReference type="GenomeRNAi" id="5646"/>
<dbReference type="Pharos" id="P35030">
    <property type="development level" value="Tchem"/>
</dbReference>
<dbReference type="PRO" id="PR:P35030"/>
<dbReference type="Proteomes" id="UP000005640">
    <property type="component" value="Chromosome 9"/>
</dbReference>
<dbReference type="RNAct" id="P35030">
    <property type="molecule type" value="protein"/>
</dbReference>
<dbReference type="Bgee" id="ENSG00000010438">
    <property type="expression patterns" value="Expressed in body of pancreas and 165 other cell types or tissues"/>
</dbReference>
<dbReference type="GO" id="GO:0005576">
    <property type="term" value="C:extracellular region"/>
    <property type="evidence" value="ECO:0000304"/>
    <property type="project" value="Reactome"/>
</dbReference>
<dbReference type="GO" id="GO:0005615">
    <property type="term" value="C:extracellular space"/>
    <property type="evidence" value="ECO:0000314"/>
    <property type="project" value="UniProtKB"/>
</dbReference>
<dbReference type="GO" id="GO:1904724">
    <property type="term" value="C:tertiary granule lumen"/>
    <property type="evidence" value="ECO:0000304"/>
    <property type="project" value="Reactome"/>
</dbReference>
<dbReference type="GO" id="GO:0005509">
    <property type="term" value="F:calcium ion binding"/>
    <property type="evidence" value="ECO:0000314"/>
    <property type="project" value="UniProtKB"/>
</dbReference>
<dbReference type="GO" id="GO:0004252">
    <property type="term" value="F:serine-type endopeptidase activity"/>
    <property type="evidence" value="ECO:0000314"/>
    <property type="project" value="UniProtKB"/>
</dbReference>
<dbReference type="GO" id="GO:0008236">
    <property type="term" value="F:serine-type peptidase activity"/>
    <property type="evidence" value="ECO:0000314"/>
    <property type="project" value="UniProtKB"/>
</dbReference>
<dbReference type="GO" id="GO:0019730">
    <property type="term" value="P:antimicrobial humoral response"/>
    <property type="evidence" value="ECO:0000304"/>
    <property type="project" value="Reactome"/>
</dbReference>
<dbReference type="GO" id="GO:0007586">
    <property type="term" value="P:digestion"/>
    <property type="evidence" value="ECO:0000304"/>
    <property type="project" value="UniProtKB"/>
</dbReference>
<dbReference type="GO" id="GO:0043542">
    <property type="term" value="P:endothelial cell migration"/>
    <property type="evidence" value="ECO:0000315"/>
    <property type="project" value="UniProtKB"/>
</dbReference>
<dbReference type="GO" id="GO:0006508">
    <property type="term" value="P:proteolysis"/>
    <property type="evidence" value="ECO:0000314"/>
    <property type="project" value="UniProtKB"/>
</dbReference>
<dbReference type="GO" id="GO:0031638">
    <property type="term" value="P:zymogen activation"/>
    <property type="evidence" value="ECO:0000314"/>
    <property type="project" value="UniProtKB"/>
</dbReference>
<dbReference type="CDD" id="cd00190">
    <property type="entry name" value="Tryp_SPc"/>
    <property type="match status" value="1"/>
</dbReference>
<dbReference type="FunFam" id="2.40.10.10:FF:000019">
    <property type="entry name" value="Anionic trypsin"/>
    <property type="match status" value="1"/>
</dbReference>
<dbReference type="Gene3D" id="2.40.10.10">
    <property type="entry name" value="Trypsin-like serine proteases"/>
    <property type="match status" value="2"/>
</dbReference>
<dbReference type="InterPro" id="IPR009003">
    <property type="entry name" value="Peptidase_S1_PA"/>
</dbReference>
<dbReference type="InterPro" id="IPR043504">
    <property type="entry name" value="Peptidase_S1_PA_chymotrypsin"/>
</dbReference>
<dbReference type="InterPro" id="IPR001314">
    <property type="entry name" value="Peptidase_S1A"/>
</dbReference>
<dbReference type="InterPro" id="IPR050127">
    <property type="entry name" value="Serine_Proteases_S1"/>
</dbReference>
<dbReference type="InterPro" id="IPR001254">
    <property type="entry name" value="Trypsin_dom"/>
</dbReference>
<dbReference type="InterPro" id="IPR018114">
    <property type="entry name" value="TRYPSIN_HIS"/>
</dbReference>
<dbReference type="PANTHER" id="PTHR24264:SF48">
    <property type="entry name" value="TRYPSIN-3"/>
    <property type="match status" value="1"/>
</dbReference>
<dbReference type="PANTHER" id="PTHR24264">
    <property type="entry name" value="TRYPSIN-RELATED"/>
    <property type="match status" value="1"/>
</dbReference>
<dbReference type="Pfam" id="PF00089">
    <property type="entry name" value="Trypsin"/>
    <property type="match status" value="1"/>
</dbReference>
<dbReference type="PRINTS" id="PR00722">
    <property type="entry name" value="CHYMOTRYPSIN"/>
</dbReference>
<dbReference type="SMART" id="SM00020">
    <property type="entry name" value="Tryp_SPc"/>
    <property type="match status" value="1"/>
</dbReference>
<dbReference type="SUPFAM" id="SSF50494">
    <property type="entry name" value="Trypsin-like serine proteases"/>
    <property type="match status" value="1"/>
</dbReference>
<dbReference type="PROSITE" id="PS50240">
    <property type="entry name" value="TRYPSIN_DOM"/>
    <property type="match status" value="1"/>
</dbReference>
<dbReference type="PROSITE" id="PS00134">
    <property type="entry name" value="TRYPSIN_HIS"/>
    <property type="match status" value="1"/>
</dbReference>
<organism>
    <name type="scientific">Homo sapiens</name>
    <name type="common">Human</name>
    <dbReference type="NCBI Taxonomy" id="9606"/>
    <lineage>
        <taxon>Eukaryota</taxon>
        <taxon>Metazoa</taxon>
        <taxon>Chordata</taxon>
        <taxon>Craniata</taxon>
        <taxon>Vertebrata</taxon>
        <taxon>Euteleostomi</taxon>
        <taxon>Mammalia</taxon>
        <taxon>Eutheria</taxon>
        <taxon>Euarchontoglires</taxon>
        <taxon>Primates</taxon>
        <taxon>Haplorrhini</taxon>
        <taxon>Catarrhini</taxon>
        <taxon>Hominidae</taxon>
        <taxon>Homo</taxon>
    </lineage>
</organism>
<accession>P35030</accession>
<accession>A8CED1</accession>
<accession>A8CED3</accession>
<accession>A9Z1Y4</accession>
<accession>E7ES07</accession>
<accession>F8W7P3</accession>
<accession>P15951</accession>
<accession>Q15665</accession>
<accession>Q5VXV0</accession>
<accession>Q6ISJ4</accession>
<accession>Q9UQV3</accession>
<reference key="1">
    <citation type="journal article" date="1993" name="Gene">
        <title>Cloning of the cDNA encoding human brain trypsinogen and characterization of its product.</title>
        <authorList>
            <person name="Wiegand U."/>
            <person name="Corbach S."/>
            <person name="Minn A."/>
            <person name="Kang J."/>
            <person name="Mueller-Hill B."/>
        </authorList>
    </citation>
    <scope>NUCLEOTIDE SEQUENCE [MRNA] (ISOFORMS 1 AND 2)</scope>
    <scope>VARIANT ALA-188</scope>
    <scope>TISSUE SPECIFICITY</scope>
    <source>
        <tissue>Brain</tissue>
    </source>
</reference>
<reference key="2">
    <citation type="journal article" date="1990" name="Nucleic Acids Res.">
        <title>Nucleotide sequence of the human pancreatic trypsinogen III cDNA.</title>
        <authorList>
            <person name="Tani T."/>
            <person name="Kawashima I."/>
            <person name="Mita K."/>
            <person name="Takiguchi Y."/>
        </authorList>
    </citation>
    <scope>NUCLEOTIDE SEQUENCE [MRNA] (ISOFORM 3)</scope>
    <scope>VARIANTS ALA-188 AND CYS-232</scope>
    <source>
        <tissue>Pancreas</tissue>
    </source>
</reference>
<reference key="3">
    <citation type="journal article" date="1997" name="J. Biol. Chem.">
        <title>Identification and expression of the cDNA-encoding human mesotrypsin(ogen), an isoform of trypsin with inhibitor resistance.</title>
        <authorList>
            <person name="Nyaruhucha C.N."/>
            <person name="Kito M."/>
            <person name="Fukuoka S.I."/>
        </authorList>
    </citation>
    <scope>NUCLEOTIDE SEQUENCE [MRNA] (ISOFORM 3)</scope>
    <scope>FUNCTION</scope>
    <scope>CATALYTIC ACTIVITY</scope>
    <scope>ACTIVITY REGULATION</scope>
    <scope>VARIANT ALA-188</scope>
    <source>
        <tissue>Pancreas</tissue>
    </source>
</reference>
<reference key="4">
    <citation type="submission" date="1997-10" db="EMBL/GenBank/DDBJ databases">
        <title>Sequence of a large duplication from human chromosome 7 to chromosome 9 containing a portion of the T cell receptor beta locus and trypsinogen locus.</title>
        <authorList>
            <person name="Rowen L."/>
            <person name="Trask B."/>
            <person name="Boysen C."/>
            <person name="Qin S."/>
            <person name="Wang K."/>
            <person name="Ahearn M.E."/>
            <person name="Hood L."/>
        </authorList>
    </citation>
    <scope>NUCLEOTIDE SEQUENCE [GENOMIC DNA] (ISOFORM 3)</scope>
    <scope>VARIANT ALA-188</scope>
</reference>
<reference key="5">
    <citation type="journal article" date="2010" name="J. Invest. Dermatol.">
        <title>Keratinocytes synthesize enteropeptidase and multiple forms of trypsinogen during terminal differentiation.</title>
        <authorList>
            <person name="Nakanishi J."/>
            <person name="Yamamoto M."/>
            <person name="Koyama J."/>
            <person name="Sato J."/>
            <person name="Hibino T."/>
        </authorList>
    </citation>
    <scope>NUCLEOTIDE SEQUENCE [MRNA] (ISOFORMS 1 AND 5)</scope>
    <scope>VARIANT ALA-188</scope>
</reference>
<reference key="6">
    <citation type="journal article" date="2004" name="Nature">
        <title>DNA sequence and analysis of human chromosome 9.</title>
        <authorList>
            <person name="Humphray S.J."/>
            <person name="Oliver K."/>
            <person name="Hunt A.R."/>
            <person name="Plumb R.W."/>
            <person name="Loveland J.E."/>
            <person name="Howe K.L."/>
            <person name="Andrews T.D."/>
            <person name="Searle S."/>
            <person name="Hunt S.E."/>
            <person name="Scott C.E."/>
            <person name="Jones M.C."/>
            <person name="Ainscough R."/>
            <person name="Almeida J.P."/>
            <person name="Ambrose K.D."/>
            <person name="Ashwell R.I.S."/>
            <person name="Babbage A.K."/>
            <person name="Babbage S."/>
            <person name="Bagguley C.L."/>
            <person name="Bailey J."/>
            <person name="Banerjee R."/>
            <person name="Barker D.J."/>
            <person name="Barlow K.F."/>
            <person name="Bates K."/>
            <person name="Beasley H."/>
            <person name="Beasley O."/>
            <person name="Bird C.P."/>
            <person name="Bray-Allen S."/>
            <person name="Brown A.J."/>
            <person name="Brown J.Y."/>
            <person name="Burford D."/>
            <person name="Burrill W."/>
            <person name="Burton J."/>
            <person name="Carder C."/>
            <person name="Carter N.P."/>
            <person name="Chapman J.C."/>
            <person name="Chen Y."/>
            <person name="Clarke G."/>
            <person name="Clark S.Y."/>
            <person name="Clee C.M."/>
            <person name="Clegg S."/>
            <person name="Collier R.E."/>
            <person name="Corby N."/>
            <person name="Crosier M."/>
            <person name="Cummings A.T."/>
            <person name="Davies J."/>
            <person name="Dhami P."/>
            <person name="Dunn M."/>
            <person name="Dutta I."/>
            <person name="Dyer L.W."/>
            <person name="Earthrowl M.E."/>
            <person name="Faulkner L."/>
            <person name="Fleming C.J."/>
            <person name="Frankish A."/>
            <person name="Frankland J.A."/>
            <person name="French L."/>
            <person name="Fricker D.G."/>
            <person name="Garner P."/>
            <person name="Garnett J."/>
            <person name="Ghori J."/>
            <person name="Gilbert J.G.R."/>
            <person name="Glison C."/>
            <person name="Grafham D.V."/>
            <person name="Gribble S."/>
            <person name="Griffiths C."/>
            <person name="Griffiths-Jones S."/>
            <person name="Grocock R."/>
            <person name="Guy J."/>
            <person name="Hall R.E."/>
            <person name="Hammond S."/>
            <person name="Harley J.L."/>
            <person name="Harrison E.S.I."/>
            <person name="Hart E.A."/>
            <person name="Heath P.D."/>
            <person name="Henderson C.D."/>
            <person name="Hopkins B.L."/>
            <person name="Howard P.J."/>
            <person name="Howden P.J."/>
            <person name="Huckle E."/>
            <person name="Johnson C."/>
            <person name="Johnson D."/>
            <person name="Joy A.A."/>
            <person name="Kay M."/>
            <person name="Keenan S."/>
            <person name="Kershaw J.K."/>
            <person name="Kimberley A.M."/>
            <person name="King A."/>
            <person name="Knights A."/>
            <person name="Laird G.K."/>
            <person name="Langford C."/>
            <person name="Lawlor S."/>
            <person name="Leongamornlert D.A."/>
            <person name="Leversha M."/>
            <person name="Lloyd C."/>
            <person name="Lloyd D.M."/>
            <person name="Lovell J."/>
            <person name="Martin S."/>
            <person name="Mashreghi-Mohammadi M."/>
            <person name="Matthews L."/>
            <person name="McLaren S."/>
            <person name="McLay K.E."/>
            <person name="McMurray A."/>
            <person name="Milne S."/>
            <person name="Nickerson T."/>
            <person name="Nisbett J."/>
            <person name="Nordsiek G."/>
            <person name="Pearce A.V."/>
            <person name="Peck A.I."/>
            <person name="Porter K.M."/>
            <person name="Pandian R."/>
            <person name="Pelan S."/>
            <person name="Phillimore B."/>
            <person name="Povey S."/>
            <person name="Ramsey Y."/>
            <person name="Rand V."/>
            <person name="Scharfe M."/>
            <person name="Sehra H.K."/>
            <person name="Shownkeen R."/>
            <person name="Sims S.K."/>
            <person name="Skuce C.D."/>
            <person name="Smith M."/>
            <person name="Steward C.A."/>
            <person name="Swarbreck D."/>
            <person name="Sycamore N."/>
            <person name="Tester J."/>
            <person name="Thorpe A."/>
            <person name="Tracey A."/>
            <person name="Tromans A."/>
            <person name="Thomas D.W."/>
            <person name="Wall M."/>
            <person name="Wallis J.M."/>
            <person name="West A.P."/>
            <person name="Whitehead S.L."/>
            <person name="Willey D.L."/>
            <person name="Williams S.A."/>
            <person name="Wilming L."/>
            <person name="Wray P.W."/>
            <person name="Young L."/>
            <person name="Ashurst J.L."/>
            <person name="Coulson A."/>
            <person name="Blocker H."/>
            <person name="Durbin R.M."/>
            <person name="Sulston J.E."/>
            <person name="Hubbard T."/>
            <person name="Jackson M.J."/>
            <person name="Bentley D.R."/>
            <person name="Beck S."/>
            <person name="Rogers J."/>
            <person name="Dunham I."/>
        </authorList>
    </citation>
    <scope>NUCLEOTIDE SEQUENCE [LARGE SCALE GENOMIC DNA]</scope>
</reference>
<reference key="7">
    <citation type="submission" date="2005-09" db="EMBL/GenBank/DDBJ databases">
        <authorList>
            <person name="Mural R.J."/>
            <person name="Istrail S."/>
            <person name="Sutton G."/>
            <person name="Florea L."/>
            <person name="Halpern A.L."/>
            <person name="Mobarry C.M."/>
            <person name="Lippert R."/>
            <person name="Walenz B."/>
            <person name="Shatkay H."/>
            <person name="Dew I."/>
            <person name="Miller J.R."/>
            <person name="Flanigan M.J."/>
            <person name="Edwards N.J."/>
            <person name="Bolanos R."/>
            <person name="Fasulo D."/>
            <person name="Halldorsson B.V."/>
            <person name="Hannenhalli S."/>
            <person name="Turner R."/>
            <person name="Yooseph S."/>
            <person name="Lu F."/>
            <person name="Nusskern D.R."/>
            <person name="Shue B.C."/>
            <person name="Zheng X.H."/>
            <person name="Zhong F."/>
            <person name="Delcher A.L."/>
            <person name="Huson D.H."/>
            <person name="Kravitz S.A."/>
            <person name="Mouchard L."/>
            <person name="Reinert K."/>
            <person name="Remington K.A."/>
            <person name="Clark A.G."/>
            <person name="Waterman M.S."/>
            <person name="Eichler E.E."/>
            <person name="Adams M.D."/>
            <person name="Hunkapiller M.W."/>
            <person name="Myers E.W."/>
            <person name="Venter J.C."/>
        </authorList>
    </citation>
    <scope>NUCLEOTIDE SEQUENCE [LARGE SCALE GENOMIC DNA]</scope>
    <scope>VARIANT ALA-188</scope>
</reference>
<reference key="8">
    <citation type="journal article" date="2004" name="Genome Res.">
        <title>The status, quality, and expansion of the NIH full-length cDNA project: the Mammalian Gene Collection (MGC).</title>
        <authorList>
            <consortium name="The MGC Project Team"/>
        </authorList>
    </citation>
    <scope>NUCLEOTIDE SEQUENCE [LARGE SCALE MRNA] (ISOFORM 3)</scope>
    <scope>VARIANT ALA-188</scope>
</reference>
<reference key="9">
    <citation type="journal article" date="2002" name="Nat. Immunol.">
        <title>Paneth cell trypsin is the processing enzyme for human defensin-5.</title>
        <authorList>
            <person name="Ghosh D."/>
            <person name="Porter E."/>
            <person name="Shen B."/>
            <person name="Lee S.K."/>
            <person name="Wilk D."/>
            <person name="Drazba J."/>
            <person name="Yadav S.P."/>
            <person name="Crabb J.W."/>
            <person name="Ganz T."/>
            <person name="Bevins C.L."/>
        </authorList>
    </citation>
    <scope>TISSUE SPECIFICITY</scope>
</reference>
<reference key="10">
    <citation type="journal article" date="1984" name="Gastroenterology">
        <title>Mesotrypsin: a new inhibitor-resistant protease from a zymogen in human pancreatic tissue and fluid.</title>
        <authorList>
            <person name="Rinderknecht H."/>
            <person name="Renner I.G."/>
            <person name="Abramson S.B."/>
            <person name="Carmack C."/>
        </authorList>
    </citation>
    <scope>CATALYTIC ACTIVITY</scope>
    <scope>COFACTOR</scope>
    <scope>BIOPHYSICOCHEMICAL PROPERTIES</scope>
    <scope>SUBCELLULAR LOCATION</scope>
    <scope>TISSUE SPECIFICITY</scope>
</reference>
<reference key="11">
    <citation type="journal article" date="2003" name="J. Biol. Chem.">
        <title>Human mesotrypsin is a unique digestive protease specialized for the degradation of trypsin inhibitors.</title>
        <authorList>
            <person name="Szmola R."/>
            <person name="Kukor Z."/>
            <person name="Sahin-Toth M."/>
        </authorList>
    </citation>
    <scope>FUNCTION</scope>
    <scope>CATALYTIC ACTIVITY</scope>
    <scope>COFACTOR</scope>
</reference>
<reference key="12">
    <citation type="journal article" date="2002" name="J. Mol. Biol.">
        <title>Crystal structure reveals basis for the inhibitor resistance of human brain trypsin.</title>
        <authorList>
            <person name="Katona G."/>
            <person name="Berglund G.I."/>
            <person name="Hajdu J."/>
            <person name="Graf L."/>
            <person name="Szilagyi L."/>
        </authorList>
    </citation>
    <scope>X-RAY CRYSTALLOGRAPHY (1.7 ANGSTROMS) OF 81-304 (ISOFORM A) IN COMPLEX WITH CALCIUM IONS</scope>
    <scope>COFACTOR</scope>
    <scope>CATALYTIC ACTIVITY</scope>
    <scope>DISULFIDE BONDS</scope>
</reference>
<reference evidence="27" key="13">
    <citation type="journal article" date="2008" name="J. Biol. Chem.">
        <title>Structural basis for accelerated cleavage of bovine pancreatic trypsin inhibitor (BPTI) by human mesotrypsin.</title>
        <authorList>
            <person name="Salameh M.A."/>
            <person name="Soares A.S."/>
            <person name="Hockla A."/>
            <person name="Radisky E.S."/>
        </authorList>
    </citation>
    <scope>X-RAY CRYSTALLOGRAPHY (1.40 ANGSTROMS) OF 81-304 OF MUTANT ALA-257</scope>
    <scope>FUNCTION</scope>
    <scope>CATALYTIC ACTIVITY</scope>
    <scope>ACTIVITY REGULATION</scope>
    <scope>DISULFIDE BONDS</scope>
</reference>
<reference evidence="33 34" key="14">
    <citation type="journal article" date="2014" name="J. Biol. Chem.">
        <title>Sequence and conformational specificity in substrate recognition: several human Kunitz protease inhibitor domains are specific substrates of mesotrypsin.</title>
        <authorList>
            <person name="Pendlebury D."/>
            <person name="Wang R."/>
            <person name="Henin R.D."/>
            <person name="Hockla A."/>
            <person name="Soares A.S."/>
            <person name="Madden B.J."/>
            <person name="Kazanov M.D."/>
            <person name="Radisky E.S."/>
        </authorList>
    </citation>
    <scope>X-RAY CRYSTALLOGRAPHY (1.65 ANGSTROMS) OF 81-304 IN COMPLEX WITH CALCIUM</scope>
    <scope>CATALYTIC ACTIVITY</scope>
    <scope>FUNCTION</scope>
    <scope>COFACTOR</scope>
    <scope>DISULFIDE BONDS</scope>
</reference>
<reference evidence="36" key="15">
    <citation type="journal article" date="2016" name="J. Biol. Chem.">
        <title>An Acrobatic Substrate Metamorphosis Reveals a Requirement for Substrate Conformational Dynamics in Trypsin Proteolysis.</title>
        <authorList>
            <person name="Kayode O."/>
            <person name="Wang R."/>
            <person name="Pendlebury D.F."/>
            <person name="Cohen I."/>
            <person name="Henin R.D."/>
            <person name="Hockla A."/>
            <person name="Soares A.S."/>
            <person name="Papo N."/>
            <person name="Caulfield T.R."/>
            <person name="Radisky E.S."/>
        </authorList>
    </citation>
    <scope>X-RAY CRYSTALLOGRAPHY (1.40 ANGSTROMS) OF 81-304 OF MUTANT ALA-257 IN COMPLEX WITH CALCIUM</scope>
    <scope>FUNCTION</scope>
    <scope>CATALYTIC ACTIVITY</scope>
    <scope>COFACTOR</scope>
    <scope>DISULFIDE BONDS</scope>
    <scope>ACTIVE SITE</scope>
    <scope>MUTAGENESIS OF SER-257</scope>
</reference>
<protein>
    <recommendedName>
        <fullName>Trypsin-3</fullName>
        <ecNumber evidence="4 6 8 11 12 13 15">3.4.21.4</ecNumber>
    </recommendedName>
    <alternativeName>
        <fullName evidence="22">Brain trypsinogen</fullName>
    </alternativeName>
    <alternativeName>
        <fullName evidence="18">Mesotrypsin</fullName>
    </alternativeName>
    <alternativeName>
        <fullName evidence="23">Mesotrypsinogen</fullName>
    </alternativeName>
    <alternativeName>
        <fullName>Serine protease 3</fullName>
    </alternativeName>
    <alternativeName>
        <fullName>Serine protease 4</fullName>
    </alternativeName>
    <alternativeName>
        <fullName>Trypsin III</fullName>
    </alternativeName>
    <alternativeName>
        <fullName evidence="22">Trypsin IV</fullName>
    </alternativeName>
</protein>
<name>TRY3_HUMAN</name>
<keyword id="KW-0002">3D-structure</keyword>
<keyword id="KW-0025">Alternative splicing</keyword>
<keyword id="KW-0106">Calcium</keyword>
<keyword id="KW-0222">Digestion</keyword>
<keyword id="KW-1015">Disulfide bond</keyword>
<keyword id="KW-0378">Hydrolase</keyword>
<keyword id="KW-0479">Metal-binding</keyword>
<keyword id="KW-0645">Protease</keyword>
<keyword id="KW-1267">Proteomics identification</keyword>
<keyword id="KW-1185">Reference proteome</keyword>
<keyword id="KW-0964">Secreted</keyword>
<keyword id="KW-0720">Serine protease</keyword>
<keyword id="KW-0732">Signal</keyword>
<keyword id="KW-0765">Sulfation</keyword>
<keyword id="KW-0865">Zymogen</keyword>
<feature type="signal peptide" evidence="2">
    <location>
        <begin position="1"/>
        <end status="unknown"/>
    </location>
</feature>
<feature type="propeptide" id="PRO_0000028201" description="Activation peptide">
    <location>
        <begin status="unknown"/>
        <end position="80"/>
    </location>
</feature>
<feature type="chain" id="PRO_0000028202" description="Trypsin-3">
    <location>
        <begin position="81"/>
        <end position="304"/>
    </location>
</feature>
<feature type="domain" description="Peptidase S1" evidence="3">
    <location>
        <begin position="81"/>
        <end position="301"/>
    </location>
</feature>
<feature type="active site" description="Charge relay system" evidence="3 25">
    <location>
        <position position="120"/>
    </location>
</feature>
<feature type="active site" description="Charge relay system" evidence="3 25">
    <location>
        <position position="164"/>
    </location>
</feature>
<feature type="active site" description="Charge relay system" evidence="3 25">
    <location>
        <position position="257"/>
    </location>
</feature>
<feature type="binding site" evidence="4 11 12 26 28 29 30 31 33 34 36 37">
    <location>
        <position position="132"/>
    </location>
    <ligand>
        <name>Ca(2+)</name>
        <dbReference type="ChEBI" id="CHEBI:29108"/>
    </ligand>
</feature>
<feature type="binding site" evidence="4 11 12 26 28 29 30 31 33 34 36 37">
    <location>
        <position position="134"/>
    </location>
    <ligand>
        <name>Ca(2+)</name>
        <dbReference type="ChEBI" id="CHEBI:29108"/>
    </ligand>
</feature>
<feature type="binding site" evidence="4 11 12 26 28 29 30 31 33 34 36 37">
    <location>
        <position position="137"/>
    </location>
    <ligand>
        <name>Ca(2+)</name>
        <dbReference type="ChEBI" id="CHEBI:29108"/>
    </ligand>
</feature>
<feature type="binding site" evidence="4 11 12 26 28 29 30 31 33 34 36">
    <location>
        <position position="139"/>
    </location>
    <ligand>
        <name>Ca(2+)</name>
        <dbReference type="ChEBI" id="CHEBI:29108"/>
    </ligand>
</feature>
<feature type="binding site" evidence="4 11 12 26 28 29 30 31 34 36 37">
    <location>
        <position position="142"/>
    </location>
    <ligand>
        <name>Ca(2+)</name>
        <dbReference type="ChEBI" id="CHEBI:29108"/>
    </ligand>
</feature>
<feature type="site" description="Required for specificity" evidence="1">
    <location>
        <position position="251"/>
    </location>
</feature>
<feature type="modified residue" description="Sulfotyrosine" evidence="1">
    <location>
        <position position="211"/>
    </location>
</feature>
<feature type="disulfide bond" evidence="4 8 11 12 26 27 28 29 30 31 32 33 34 35 36 37">
    <location>
        <begin position="87"/>
        <end position="217"/>
    </location>
</feature>
<feature type="disulfide bond" evidence="4 8 11 12 26 27 28 29 30 31 32 33 34 35 36 37">
    <location>
        <begin position="105"/>
        <end position="121"/>
    </location>
</feature>
<feature type="disulfide bond" evidence="4 8 11 12 26 27 28 29 30 31 32 33 34 35 36 37">
    <location>
        <begin position="196"/>
        <end position="263"/>
    </location>
</feature>
<feature type="disulfide bond" evidence="4 8 11 12 26 27 28 29 30 31 32 33 34 35 36 37">
    <location>
        <begin position="228"/>
        <end position="242"/>
    </location>
</feature>
<feature type="disulfide bond" evidence="4 8 11 12 26 27 28 29 30 31 32 33 34 35 36 37">
    <location>
        <begin position="253"/>
        <end position="277"/>
    </location>
</feature>
<feature type="splice variant" id="VSP_005409" description="In isoform 4." evidence="24">
    <original>MCGPDDRCPARWPGPGRAVKCGKGLAAARPGRVERGGAQRGGAGLELHPLLGGRTWRAARDADGCEALGTV</original>
    <variation>MHMRETSGFTLKKGRSAPLVFHPPDALI</variation>
    <location>
        <begin position="1"/>
        <end position="71"/>
    </location>
</feature>
<feature type="splice variant" id="VSP_005410" description="In isoform 3." evidence="19 21 23">
    <original>MCGPDDRCPARWPGPGRAVKCGKGLAAARPGRVERGGAQRGGAGLELHPLLGGRTWRAARDADGCEALGT</original>
    <variation>MNPFLILAFVGAA</variation>
    <location>
        <begin position="1"/>
        <end position="70"/>
    </location>
</feature>
<feature type="splice variant" id="VSP_053779" description="In isoform 5." evidence="20">
    <original>MCGPDDRCPARWPGPGRAVKCGKGLAAARPGRVERGGAQRGGAGLELHPLLGGRTWRAARDADGCEALGT</original>
    <variation>MGPAGE</variation>
    <location>
        <begin position="1"/>
        <end position="70"/>
    </location>
</feature>
<feature type="splice variant" id="VSP_042074" description="In isoform 2." evidence="22">
    <original>MCGPDDRCPARWPGPGRAVKCGKGLAAARPGRVERGGAQRGGAGL</original>
    <variation>M</variation>
    <location>
        <begin position="1"/>
        <end position="45"/>
    </location>
</feature>
<feature type="sequence variant" id="VAR_067459" description="In dbSNP:rs11547028.">
    <original>A</original>
    <variation>V</variation>
    <location>
        <position position="174"/>
    </location>
</feature>
<feature type="sequence variant" id="VAR_046794" description="In dbSNP:rs855581." evidence="7 9 10 14 15 16 17">
    <original>T</original>
    <variation>A</variation>
    <location>
        <position position="188"/>
    </location>
</feature>
<feature type="sequence variant" id="VAR_059788" description="In dbSNP:rs1063273.">
    <original>T</original>
    <variation>S</variation>
    <location>
        <position position="224"/>
    </location>
</feature>
<feature type="sequence variant" id="VAR_046795" description="In dbSNP:rs1048379." evidence="10">
    <original>Y</original>
    <variation>C</variation>
    <location>
        <position position="232"/>
    </location>
</feature>
<feature type="mutagenesis site" description="Loss of catalytic activity." evidence="12">
    <original>S</original>
    <variation>A</variation>
    <location>
        <position position="257"/>
    </location>
</feature>
<feature type="sequence conflict" description="In Ref. 1; CAA50484." evidence="24" ref="1">
    <location>
        <position position="89"/>
    </location>
</feature>
<feature type="sequence conflict" description="In Ref. 2; CAA33527." evidence="24" ref="2">
    <original>TQ</original>
    <variation>RE</variation>
    <location>
        <begin position="224"/>
        <end position="225"/>
    </location>
</feature>
<feature type="sequence conflict" description="In Ref. 2; CAA33527." evidence="24" ref="2">
    <original>CQ</original>
    <variation>WK</variation>
    <location>
        <begin position="253"/>
        <end position="254"/>
    </location>
</feature>
<feature type="strand" evidence="39">
    <location>
        <begin position="89"/>
        <end position="91"/>
    </location>
</feature>
<feature type="strand" evidence="41">
    <location>
        <begin position="95"/>
        <end position="111"/>
    </location>
</feature>
<feature type="strand" evidence="41">
    <location>
        <begin position="114"/>
        <end position="117"/>
    </location>
</feature>
<feature type="helix" evidence="41">
    <location>
        <begin position="119"/>
        <end position="121"/>
    </location>
</feature>
<feature type="strand" evidence="41">
    <location>
        <begin position="127"/>
        <end position="131"/>
    </location>
</feature>
<feature type="strand" evidence="38">
    <location>
        <begin position="133"/>
        <end position="137"/>
    </location>
</feature>
<feature type="strand" evidence="41">
    <location>
        <begin position="143"/>
        <end position="152"/>
    </location>
</feature>
<feature type="turn" evidence="41">
    <location>
        <begin position="158"/>
        <end position="160"/>
    </location>
</feature>
<feature type="strand" evidence="41">
    <location>
        <begin position="166"/>
        <end position="172"/>
    </location>
</feature>
<feature type="strand" evidence="41">
    <location>
        <begin position="177"/>
        <end position="180"/>
    </location>
</feature>
<feature type="strand" evidence="41">
    <location>
        <begin position="195"/>
        <end position="201"/>
    </location>
</feature>
<feature type="strand" evidence="41">
    <location>
        <begin position="206"/>
        <end position="208"/>
    </location>
</feature>
<feature type="strand" evidence="41">
    <location>
        <begin position="216"/>
        <end position="222"/>
    </location>
</feature>
<feature type="helix" evidence="41">
    <location>
        <begin position="225"/>
        <end position="231"/>
    </location>
</feature>
<feature type="turn" evidence="41">
    <location>
        <begin position="233"/>
        <end position="235"/>
    </location>
</feature>
<feature type="strand" evidence="41">
    <location>
        <begin position="240"/>
        <end position="244"/>
    </location>
</feature>
<feature type="strand" evidence="40">
    <location>
        <begin position="246"/>
        <end position="249"/>
    </location>
</feature>
<feature type="turn" evidence="41">
    <location>
        <begin position="254"/>
        <end position="258"/>
    </location>
</feature>
<feature type="strand" evidence="41">
    <location>
        <begin position="260"/>
        <end position="263"/>
    </location>
</feature>
<feature type="strand" evidence="41">
    <location>
        <begin position="266"/>
        <end position="273"/>
    </location>
</feature>
<feature type="strand" evidence="41">
    <location>
        <begin position="275"/>
        <end position="278"/>
    </location>
</feature>
<feature type="strand" evidence="41">
    <location>
        <begin position="284"/>
        <end position="288"/>
    </location>
</feature>
<feature type="helix" evidence="41">
    <location>
        <begin position="289"/>
        <end position="292"/>
    </location>
</feature>
<feature type="helix" evidence="41">
    <location>
        <begin position="293"/>
        <end position="302"/>
    </location>
</feature>
<gene>
    <name type="primary">PRSS3</name>
    <name type="synonym">PRSS4</name>
    <name type="synonym">TRY3</name>
    <name type="synonym">TRY4</name>
</gene>